<evidence type="ECO:0000255" key="1"/>
<evidence type="ECO:0000256" key="2">
    <source>
        <dbReference type="SAM" id="MobiDB-lite"/>
    </source>
</evidence>
<evidence type="ECO:0000269" key="3">
    <source>
    </source>
</evidence>
<evidence type="ECO:0000269" key="4">
    <source>
    </source>
</evidence>
<evidence type="ECO:0000269" key="5">
    <source>
    </source>
</evidence>
<evidence type="ECO:0000305" key="6"/>
<evidence type="ECO:0000305" key="7">
    <source>
    </source>
</evidence>
<keyword id="KW-0150">Chloroplast</keyword>
<keyword id="KW-0934">Plastid</keyword>
<keyword id="KW-1185">Reference proteome</keyword>
<keyword id="KW-0809">Transit peptide</keyword>
<gene>
    <name type="primary">PAP3</name>
    <name type="synonym">FBN2</name>
    <name type="synonym">FIB2</name>
    <name type="synonym">PGL40</name>
    <name type="ordered locus">At2g35490</name>
    <name type="ORF">T32F12.13</name>
</gene>
<name>PAP3_ARATH</name>
<feature type="transit peptide" description="Chloroplast" evidence="1">
    <location>
        <begin position="1"/>
        <end position="53"/>
    </location>
</feature>
<feature type="chain" id="PRO_0000023210" description="Probable plastid-lipid-associated protein 3, chloroplastic">
    <location>
        <begin position="54"/>
        <end position="376"/>
    </location>
</feature>
<feature type="region of interest" description="Disordered" evidence="2">
    <location>
        <begin position="54"/>
        <end position="146"/>
    </location>
</feature>
<feature type="compositionally biased region" description="Polar residues" evidence="2">
    <location>
        <begin position="85"/>
        <end position="96"/>
    </location>
</feature>
<feature type="compositionally biased region" description="Basic and acidic residues" evidence="2">
    <location>
        <begin position="117"/>
        <end position="126"/>
    </location>
</feature>
<feature type="sequence conflict" description="In Ref. 3; AAK68845/AAM10011." evidence="6" ref="3">
    <original>Y</original>
    <variation>C</variation>
    <location>
        <position position="209"/>
    </location>
</feature>
<comment type="function">
    <text evidence="4">Probably involved in light/cold stress-related jasmonate (JA) biosynthesis.</text>
</comment>
<comment type="subcellular location">
    <subcellularLocation>
        <location evidence="3 5">Plastid</location>
        <location evidence="3 5">Chloroplast</location>
        <location evidence="3 5">Plastoglobule</location>
    </subcellularLocation>
</comment>
<comment type="miscellaneous">
    <text evidence="7">Simultaneous down-regulation of PAP1, PAP2 and PAP3 leads to impaired long-term acclimation to environmental constraint, namely photooxidative stress imposed by high light combined with cold.</text>
</comment>
<comment type="similarity">
    <text evidence="6">Belongs to the PAP/fibrillin family.</text>
</comment>
<dbReference type="EMBL" id="AC005314">
    <property type="protein sequence ID" value="AAC36172.1"/>
    <property type="molecule type" value="Genomic_DNA"/>
</dbReference>
<dbReference type="EMBL" id="CP002685">
    <property type="protein sequence ID" value="AEC09113.1"/>
    <property type="molecule type" value="Genomic_DNA"/>
</dbReference>
<dbReference type="EMBL" id="AY042905">
    <property type="protein sequence ID" value="AAK68845.1"/>
    <property type="molecule type" value="mRNA"/>
</dbReference>
<dbReference type="EMBL" id="AY081449">
    <property type="protein sequence ID" value="AAM10011.1"/>
    <property type="molecule type" value="mRNA"/>
</dbReference>
<dbReference type="EMBL" id="AY087815">
    <property type="protein sequence ID" value="AAM65369.1"/>
    <property type="molecule type" value="mRNA"/>
</dbReference>
<dbReference type="PIR" id="C84769">
    <property type="entry name" value="C84769"/>
</dbReference>
<dbReference type="RefSeq" id="NP_181092.1">
    <property type="nucleotide sequence ID" value="NM_129101.3"/>
</dbReference>
<dbReference type="FunCoup" id="O82291">
    <property type="interactions" value="1246"/>
</dbReference>
<dbReference type="STRING" id="3702.O82291"/>
<dbReference type="GlyGen" id="O82291">
    <property type="glycosylation" value="1 site"/>
</dbReference>
<dbReference type="iPTMnet" id="O82291"/>
<dbReference type="PaxDb" id="3702-AT2G35490.1"/>
<dbReference type="ProteomicsDB" id="236270"/>
<dbReference type="EnsemblPlants" id="AT2G35490.1">
    <property type="protein sequence ID" value="AT2G35490.1"/>
    <property type="gene ID" value="AT2G35490"/>
</dbReference>
<dbReference type="GeneID" id="818114"/>
<dbReference type="Gramene" id="AT2G35490.1">
    <property type="protein sequence ID" value="AT2G35490.1"/>
    <property type="gene ID" value="AT2G35490"/>
</dbReference>
<dbReference type="KEGG" id="ath:AT2G35490"/>
<dbReference type="Araport" id="AT2G35490"/>
<dbReference type="TAIR" id="AT2G35490">
    <property type="gene designation" value="FBN2"/>
</dbReference>
<dbReference type="eggNOG" id="ENOG502QQMX">
    <property type="taxonomic scope" value="Eukaryota"/>
</dbReference>
<dbReference type="HOGENOM" id="CLU_045041_0_2_1"/>
<dbReference type="InParanoid" id="O82291"/>
<dbReference type="OMA" id="PDEWGDR"/>
<dbReference type="OrthoDB" id="498392at2759"/>
<dbReference type="PhylomeDB" id="O82291"/>
<dbReference type="CD-CODE" id="4299E36E">
    <property type="entry name" value="Nucleolus"/>
</dbReference>
<dbReference type="PRO" id="PR:O82291"/>
<dbReference type="Proteomes" id="UP000006548">
    <property type="component" value="Chromosome 2"/>
</dbReference>
<dbReference type="ExpressionAtlas" id="O82291">
    <property type="expression patterns" value="baseline and differential"/>
</dbReference>
<dbReference type="GO" id="GO:0009507">
    <property type="term" value="C:chloroplast"/>
    <property type="evidence" value="ECO:0007005"/>
    <property type="project" value="TAIR"/>
</dbReference>
<dbReference type="GO" id="GO:0009534">
    <property type="term" value="C:chloroplast thylakoid"/>
    <property type="evidence" value="ECO:0007005"/>
    <property type="project" value="TAIR"/>
</dbReference>
<dbReference type="GO" id="GO:0009535">
    <property type="term" value="C:chloroplast thylakoid membrane"/>
    <property type="evidence" value="ECO:0007005"/>
    <property type="project" value="TAIR"/>
</dbReference>
<dbReference type="GO" id="GO:0005783">
    <property type="term" value="C:endoplasmic reticulum"/>
    <property type="evidence" value="ECO:0007005"/>
    <property type="project" value="TAIR"/>
</dbReference>
<dbReference type="GO" id="GO:0009536">
    <property type="term" value="C:plastid"/>
    <property type="evidence" value="ECO:0007005"/>
    <property type="project" value="TAIR"/>
</dbReference>
<dbReference type="GO" id="GO:0010287">
    <property type="term" value="C:plastoglobule"/>
    <property type="evidence" value="ECO:0007005"/>
    <property type="project" value="TAIR"/>
</dbReference>
<dbReference type="GO" id="GO:0009579">
    <property type="term" value="C:thylakoid"/>
    <property type="evidence" value="ECO:0007005"/>
    <property type="project" value="TAIR"/>
</dbReference>
<dbReference type="InterPro" id="IPR039633">
    <property type="entry name" value="PAP"/>
</dbReference>
<dbReference type="InterPro" id="IPR006843">
    <property type="entry name" value="PAP/fibrillin_dom"/>
</dbReference>
<dbReference type="PANTHER" id="PTHR31906">
    <property type="entry name" value="PLASTID-LIPID-ASSOCIATED PROTEIN 4, CHLOROPLASTIC-RELATED"/>
    <property type="match status" value="1"/>
</dbReference>
<dbReference type="Pfam" id="PF04755">
    <property type="entry name" value="PAP_fibrillin"/>
    <property type="match status" value="1"/>
</dbReference>
<organism>
    <name type="scientific">Arabidopsis thaliana</name>
    <name type="common">Mouse-ear cress</name>
    <dbReference type="NCBI Taxonomy" id="3702"/>
    <lineage>
        <taxon>Eukaryota</taxon>
        <taxon>Viridiplantae</taxon>
        <taxon>Streptophyta</taxon>
        <taxon>Embryophyta</taxon>
        <taxon>Tracheophyta</taxon>
        <taxon>Spermatophyta</taxon>
        <taxon>Magnoliopsida</taxon>
        <taxon>eudicotyledons</taxon>
        <taxon>Gunneridae</taxon>
        <taxon>Pentapetalae</taxon>
        <taxon>rosids</taxon>
        <taxon>malvids</taxon>
        <taxon>Brassicales</taxon>
        <taxon>Brassicaceae</taxon>
        <taxon>Camelineae</taxon>
        <taxon>Arabidopsis</taxon>
    </lineage>
</organism>
<protein>
    <recommendedName>
        <fullName>Probable plastid-lipid-associated protein 3, chloroplastic</fullName>
        <shortName>AtPap3</shortName>
    </recommendedName>
    <alternativeName>
        <fullName>Fibrillin-2</fullName>
    </alternativeName>
    <alternativeName>
        <fullName>Plastoglobulin 40</fullName>
        <shortName>AtPGL40</shortName>
    </alternativeName>
</protein>
<reference key="1">
    <citation type="journal article" date="1999" name="Nature">
        <title>Sequence and analysis of chromosome 2 of the plant Arabidopsis thaliana.</title>
        <authorList>
            <person name="Lin X."/>
            <person name="Kaul S."/>
            <person name="Rounsley S.D."/>
            <person name="Shea T.P."/>
            <person name="Benito M.-I."/>
            <person name="Town C.D."/>
            <person name="Fujii C.Y."/>
            <person name="Mason T.M."/>
            <person name="Bowman C.L."/>
            <person name="Barnstead M.E."/>
            <person name="Feldblyum T.V."/>
            <person name="Buell C.R."/>
            <person name="Ketchum K.A."/>
            <person name="Lee J.J."/>
            <person name="Ronning C.M."/>
            <person name="Koo H.L."/>
            <person name="Moffat K.S."/>
            <person name="Cronin L.A."/>
            <person name="Shen M."/>
            <person name="Pai G."/>
            <person name="Van Aken S."/>
            <person name="Umayam L."/>
            <person name="Tallon L.J."/>
            <person name="Gill J.E."/>
            <person name="Adams M.D."/>
            <person name="Carrera A.J."/>
            <person name="Creasy T.H."/>
            <person name="Goodman H.M."/>
            <person name="Somerville C.R."/>
            <person name="Copenhaver G.P."/>
            <person name="Preuss D."/>
            <person name="Nierman W.C."/>
            <person name="White O."/>
            <person name="Eisen J.A."/>
            <person name="Salzberg S.L."/>
            <person name="Fraser C.M."/>
            <person name="Venter J.C."/>
        </authorList>
    </citation>
    <scope>NUCLEOTIDE SEQUENCE [LARGE SCALE GENOMIC DNA]</scope>
    <source>
        <strain>cv. Columbia</strain>
    </source>
</reference>
<reference key="2">
    <citation type="journal article" date="2017" name="Plant J.">
        <title>Araport11: a complete reannotation of the Arabidopsis thaliana reference genome.</title>
        <authorList>
            <person name="Cheng C.Y."/>
            <person name="Krishnakumar V."/>
            <person name="Chan A.P."/>
            <person name="Thibaud-Nissen F."/>
            <person name="Schobel S."/>
            <person name="Town C.D."/>
        </authorList>
    </citation>
    <scope>GENOME REANNOTATION</scope>
    <source>
        <strain>cv. Columbia</strain>
    </source>
</reference>
<reference key="3">
    <citation type="journal article" date="2003" name="Science">
        <title>Empirical analysis of transcriptional activity in the Arabidopsis genome.</title>
        <authorList>
            <person name="Yamada K."/>
            <person name="Lim J."/>
            <person name="Dale J.M."/>
            <person name="Chen H."/>
            <person name="Shinn P."/>
            <person name="Palm C.J."/>
            <person name="Southwick A.M."/>
            <person name="Wu H.C."/>
            <person name="Kim C.J."/>
            <person name="Nguyen M."/>
            <person name="Pham P.K."/>
            <person name="Cheuk R.F."/>
            <person name="Karlin-Newmann G."/>
            <person name="Liu S.X."/>
            <person name="Lam B."/>
            <person name="Sakano H."/>
            <person name="Wu T."/>
            <person name="Yu G."/>
            <person name="Miranda M."/>
            <person name="Quach H.L."/>
            <person name="Tripp M."/>
            <person name="Chang C.H."/>
            <person name="Lee J.M."/>
            <person name="Toriumi M.J."/>
            <person name="Chan M.M."/>
            <person name="Tang C.C."/>
            <person name="Onodera C.S."/>
            <person name="Deng J.M."/>
            <person name="Akiyama K."/>
            <person name="Ansari Y."/>
            <person name="Arakawa T."/>
            <person name="Banh J."/>
            <person name="Banno F."/>
            <person name="Bowser L."/>
            <person name="Brooks S.Y."/>
            <person name="Carninci P."/>
            <person name="Chao Q."/>
            <person name="Choy N."/>
            <person name="Enju A."/>
            <person name="Goldsmith A.D."/>
            <person name="Gurjal M."/>
            <person name="Hansen N.F."/>
            <person name="Hayashizaki Y."/>
            <person name="Johnson-Hopson C."/>
            <person name="Hsuan V.W."/>
            <person name="Iida K."/>
            <person name="Karnes M."/>
            <person name="Khan S."/>
            <person name="Koesema E."/>
            <person name="Ishida J."/>
            <person name="Jiang P.X."/>
            <person name="Jones T."/>
            <person name="Kawai J."/>
            <person name="Kamiya A."/>
            <person name="Meyers C."/>
            <person name="Nakajima M."/>
            <person name="Narusaka M."/>
            <person name="Seki M."/>
            <person name="Sakurai T."/>
            <person name="Satou M."/>
            <person name="Tamse R."/>
            <person name="Vaysberg M."/>
            <person name="Wallender E.K."/>
            <person name="Wong C."/>
            <person name="Yamamura Y."/>
            <person name="Yuan S."/>
            <person name="Shinozaki K."/>
            <person name="Davis R.W."/>
            <person name="Theologis A."/>
            <person name="Ecker J.R."/>
        </authorList>
    </citation>
    <scope>NUCLEOTIDE SEQUENCE [LARGE SCALE MRNA]</scope>
    <source>
        <strain>cv. Columbia</strain>
    </source>
</reference>
<reference key="4">
    <citation type="submission" date="2002-03" db="EMBL/GenBank/DDBJ databases">
        <title>Full-length cDNA from Arabidopsis thaliana.</title>
        <authorList>
            <person name="Brover V.V."/>
            <person name="Troukhan M.E."/>
            <person name="Alexandrov N.A."/>
            <person name="Lu Y.-P."/>
            <person name="Flavell R.B."/>
            <person name="Feldmann K.A."/>
        </authorList>
    </citation>
    <scope>NUCLEOTIDE SEQUENCE [LARGE SCALE MRNA]</scope>
</reference>
<reference key="5">
    <citation type="journal article" date="2006" name="Plant Physiol.">
        <title>Protein profiling of plastoglobules in chloroplasts and chromoplasts. A surprising site for differential accumulation of metabolic enzymes.</title>
        <authorList>
            <person name="Ytterberg A.J."/>
            <person name="Peltier J.-B."/>
            <person name="van Wijk K.J."/>
        </authorList>
    </citation>
    <scope>IDENTIFICATION BY MASS SPECTROMETRY</scope>
    <scope>SUBCELLULAR LOCATION [LARGE SCALE ANALYSIS]</scope>
    <source>
        <strain>cv. Columbia</strain>
    </source>
</reference>
<reference key="6">
    <citation type="journal article" date="2010" name="Plant J.">
        <title>Plant lipid-associated fibrillin proteins condition jasmonate production under photosynthetic stress.</title>
        <authorList>
            <person name="Youssef A."/>
            <person name="Laizet Y."/>
            <person name="Block M.A."/>
            <person name="Marechal E."/>
            <person name="Alcaraz J.P."/>
            <person name="Larson T.R."/>
            <person name="Pontier D."/>
            <person name="Gaffe J."/>
            <person name="Kuntz M."/>
        </authorList>
    </citation>
    <scope>FUNCTION</scope>
</reference>
<reference key="7">
    <citation type="journal article" date="2011" name="Trends Plant Sci.">
        <title>Fibrillin protein function: the tip of the iceberg?</title>
        <authorList>
            <person name="Singh D.K."/>
            <person name="McNellis T.W."/>
        </authorList>
    </citation>
    <scope>GENE FAMILY</scope>
    <scope>NOMENCLATURE</scope>
</reference>
<reference key="8">
    <citation type="journal article" date="2012" name="Plant Physiol.">
        <title>The functional network of the Arabidopsis plastoglobule proteome based on quantitative proteomics and genome-wide coexpression analysis.</title>
        <authorList>
            <person name="Lundquist P.K."/>
            <person name="Poliakov A."/>
            <person name="Bhuiyan N.H."/>
            <person name="Zybailov B."/>
            <person name="Sun Q."/>
            <person name="van Wijk K.J."/>
        </authorList>
    </citation>
    <scope>IDENTIFICATION BY MASS SPECTROMETRY</scope>
    <scope>SUBCELLULAR LOCATION [LARGE SCALE ANALYSIS]</scope>
    <source>
        <strain>cv. Columbia</strain>
    </source>
</reference>
<accession>O82291</accession>
<accession>Q94B19</accession>
<sequence>MATLFTVARPSSLLYVSSINPSKTFSPSISLKLNSLSFSFGYRPKPLRFSKIRSSLPSESESESDLDASAVTDEWGEKPGDANEPDSQPDNVTVNVITDEWGEKSGPELEESGTRFMESDPPRNEDEWGGEIGGETEADAGNGSAVSDPTWELKRCLADSVYGTELGFKAGSEVRAEVLELVNQLEALNPTPAPLENPELLDGNWVLLYTAFSELIPLLAAGSTPLLKVKSISQSIDTNNLIIDNSTTLSSPFADFSFSATASFEVRSPSRIEVSFKEGTLKPPVIKSSVDLPESVGVFGQQISLSLLKQSLNPLQDVAANISRALSGQPPLKLPFPGNRGSSWLLTTYLDKDLRISRGDGGLFVLAREGSSLLEL</sequence>
<proteinExistence type="evidence at protein level"/>